<feature type="chain" id="PRO_0000353144" description="5-keto-4-deoxy-D-glucarate aldolase">
    <location>
        <begin position="1"/>
        <end position="256"/>
    </location>
</feature>
<feature type="active site" description="Proton acceptor" evidence="1">
    <location>
        <position position="50"/>
    </location>
</feature>
<feature type="binding site" evidence="1">
    <location>
        <position position="151"/>
    </location>
    <ligand>
        <name>substrate</name>
    </ligand>
</feature>
<feature type="binding site" evidence="1">
    <location>
        <position position="153"/>
    </location>
    <ligand>
        <name>Mg(2+)</name>
        <dbReference type="ChEBI" id="CHEBI:18420"/>
    </ligand>
</feature>
<feature type="binding site" evidence="1">
    <location>
        <position position="178"/>
    </location>
    <ligand>
        <name>substrate</name>
    </ligand>
</feature>
<feature type="binding site" evidence="1">
    <location>
        <position position="179"/>
    </location>
    <ligand>
        <name>Mg(2+)</name>
        <dbReference type="ChEBI" id="CHEBI:18420"/>
    </ligand>
</feature>
<feature type="binding site" evidence="1">
    <location>
        <position position="179"/>
    </location>
    <ligand>
        <name>substrate</name>
    </ligand>
</feature>
<feature type="site" description="Transition state stabilizer" evidence="1">
    <location>
        <position position="75"/>
    </location>
</feature>
<feature type="site" description="Increases basicity of active site His" evidence="1">
    <location>
        <position position="89"/>
    </location>
</feature>
<keyword id="KW-0456">Lyase</keyword>
<keyword id="KW-0460">Magnesium</keyword>
<keyword id="KW-0479">Metal-binding</keyword>
<organism>
    <name type="scientific">Escherichia coli (strain SMS-3-5 / SECEC)</name>
    <dbReference type="NCBI Taxonomy" id="439855"/>
    <lineage>
        <taxon>Bacteria</taxon>
        <taxon>Pseudomonadati</taxon>
        <taxon>Pseudomonadota</taxon>
        <taxon>Gammaproteobacteria</taxon>
        <taxon>Enterobacterales</taxon>
        <taxon>Enterobacteriaceae</taxon>
        <taxon>Escherichia</taxon>
    </lineage>
</organism>
<dbReference type="EC" id="4.1.2.20" evidence="1"/>
<dbReference type="EMBL" id="CP000970">
    <property type="protein sequence ID" value="ACB18194.1"/>
    <property type="molecule type" value="Genomic_DNA"/>
</dbReference>
<dbReference type="RefSeq" id="WP_001058227.1">
    <property type="nucleotide sequence ID" value="NC_010498.1"/>
</dbReference>
<dbReference type="SMR" id="B1LFM7"/>
<dbReference type="GeneID" id="93778860"/>
<dbReference type="KEGG" id="ecm:EcSMS35_3421"/>
<dbReference type="HOGENOM" id="CLU_059964_1_0_6"/>
<dbReference type="UniPathway" id="UPA00565">
    <property type="reaction ID" value="UER00630"/>
</dbReference>
<dbReference type="Proteomes" id="UP000007011">
    <property type="component" value="Chromosome"/>
</dbReference>
<dbReference type="GO" id="GO:0005737">
    <property type="term" value="C:cytoplasm"/>
    <property type="evidence" value="ECO:0007669"/>
    <property type="project" value="TreeGrafter"/>
</dbReference>
<dbReference type="GO" id="GO:0008672">
    <property type="term" value="F:2-dehydro-3-deoxyglucarate aldolase activity"/>
    <property type="evidence" value="ECO:0007669"/>
    <property type="project" value="UniProtKB-UniRule"/>
</dbReference>
<dbReference type="GO" id="GO:0000287">
    <property type="term" value="F:magnesium ion binding"/>
    <property type="evidence" value="ECO:0007669"/>
    <property type="project" value="UniProtKB-UniRule"/>
</dbReference>
<dbReference type="GO" id="GO:0042838">
    <property type="term" value="P:D-glucarate catabolic process"/>
    <property type="evidence" value="ECO:0007669"/>
    <property type="project" value="UniProtKB-UniRule"/>
</dbReference>
<dbReference type="GO" id="GO:0046392">
    <property type="term" value="P:galactarate catabolic process"/>
    <property type="evidence" value="ECO:0007669"/>
    <property type="project" value="UniProtKB-UniRule"/>
</dbReference>
<dbReference type="FunFam" id="3.20.20.60:FF:000004">
    <property type="entry name" value="5-keto-4-deoxy-D-glucarate aldolase"/>
    <property type="match status" value="1"/>
</dbReference>
<dbReference type="Gene3D" id="3.20.20.60">
    <property type="entry name" value="Phosphoenolpyruvate-binding domains"/>
    <property type="match status" value="1"/>
</dbReference>
<dbReference type="HAMAP" id="MF_01291">
    <property type="entry name" value="KDGluc_aldolase"/>
    <property type="match status" value="1"/>
</dbReference>
<dbReference type="InterPro" id="IPR005000">
    <property type="entry name" value="Aldolase/citrate-lyase_domain"/>
</dbReference>
<dbReference type="InterPro" id="IPR017648">
    <property type="entry name" value="GarL"/>
</dbReference>
<dbReference type="InterPro" id="IPR050251">
    <property type="entry name" value="HpcH-HpaI_aldolase"/>
</dbReference>
<dbReference type="InterPro" id="IPR015813">
    <property type="entry name" value="Pyrv/PenolPyrv_kinase-like_dom"/>
</dbReference>
<dbReference type="InterPro" id="IPR040442">
    <property type="entry name" value="Pyrv_kinase-like_dom_sf"/>
</dbReference>
<dbReference type="NCBIfam" id="TIGR03239">
    <property type="entry name" value="GarL"/>
    <property type="match status" value="1"/>
</dbReference>
<dbReference type="NCBIfam" id="NF007849">
    <property type="entry name" value="PRK10558.1"/>
    <property type="match status" value="1"/>
</dbReference>
<dbReference type="PANTHER" id="PTHR30502">
    <property type="entry name" value="2-KETO-3-DEOXY-L-RHAMNONATE ALDOLASE"/>
    <property type="match status" value="1"/>
</dbReference>
<dbReference type="PANTHER" id="PTHR30502:SF4">
    <property type="entry name" value="5-KETO-4-DEOXY-D-GLUCARATE ALDOLASE"/>
    <property type="match status" value="1"/>
</dbReference>
<dbReference type="Pfam" id="PF03328">
    <property type="entry name" value="HpcH_HpaI"/>
    <property type="match status" value="1"/>
</dbReference>
<dbReference type="SUPFAM" id="SSF51621">
    <property type="entry name" value="Phosphoenolpyruvate/pyruvate domain"/>
    <property type="match status" value="1"/>
</dbReference>
<evidence type="ECO:0000255" key="1">
    <source>
        <dbReference type="HAMAP-Rule" id="MF_01291"/>
    </source>
</evidence>
<gene>
    <name evidence="1" type="primary">garL</name>
    <name type="ordered locus">EcSMS35_3421</name>
</gene>
<comment type="function">
    <text evidence="1">Catalyzes the reversible retro-aldol cleavage of both 5-keto-4-deoxy-D-glucarate and 2-keto-3-deoxy-D-glucarate to pyruvate and tartronic semialdehyde.</text>
</comment>
<comment type="catalytic activity">
    <reaction evidence="1">
        <text>5-dehydro-4-deoxy-D-glucarate = 2-hydroxy-3-oxopropanoate + pyruvate</text>
        <dbReference type="Rhea" id="RHEA:27726"/>
        <dbReference type="ChEBI" id="CHEBI:15361"/>
        <dbReference type="ChEBI" id="CHEBI:42819"/>
        <dbReference type="ChEBI" id="CHEBI:57978"/>
    </reaction>
</comment>
<comment type="catalytic activity">
    <reaction evidence="1">
        <text>2-dehydro-3-deoxy-D-glucarate = 2-hydroxy-3-oxopropanoate + pyruvate</text>
        <dbReference type="Rhea" id="RHEA:10268"/>
        <dbReference type="ChEBI" id="CHEBI:15361"/>
        <dbReference type="ChEBI" id="CHEBI:57978"/>
        <dbReference type="ChEBI" id="CHEBI:58098"/>
        <dbReference type="EC" id="4.1.2.20"/>
    </reaction>
</comment>
<comment type="cofactor">
    <cofactor evidence="1">
        <name>Mg(2+)</name>
        <dbReference type="ChEBI" id="CHEBI:18420"/>
    </cofactor>
    <text evidence="1">Binds 1 Mg(2+) ion per subunit.</text>
</comment>
<comment type="pathway">
    <text evidence="1">Carbohydrate acid metabolism; galactarate degradation; D-glycerate from galactarate: step 2/3.</text>
</comment>
<comment type="subunit">
    <text evidence="1">Homohexamer; trimer of dimers.</text>
</comment>
<comment type="similarity">
    <text evidence="1">Belongs to the HpcH/HpaI aldolase family. KDGluc aldolase subfamily.</text>
</comment>
<protein>
    <recommendedName>
        <fullName evidence="1">5-keto-4-deoxy-D-glucarate aldolase</fullName>
        <shortName evidence="1">KDGluc aldolase</shortName>
        <shortName evidence="1">KDGlucA</shortName>
        <ecNumber evidence="1">4.1.2.20</ecNumber>
    </recommendedName>
    <alternativeName>
        <fullName evidence="1">2-dehydro-3-deoxy-D-glucarate aldolase</fullName>
    </alternativeName>
    <alternativeName>
        <fullName evidence="1">2-keto-3-deoxy-D-glucarate aldolase</fullName>
    </alternativeName>
    <alternativeName>
        <fullName evidence="1">5-dehydro-4-deoxy-D-glucarate aldolase</fullName>
    </alternativeName>
    <alternativeName>
        <fullName evidence="1">Alpha-keto-beta-deoxy-D-glucarate aldolase</fullName>
    </alternativeName>
</protein>
<name>GARL_ECOSM</name>
<proteinExistence type="inferred from homology"/>
<reference key="1">
    <citation type="journal article" date="2008" name="J. Bacteriol.">
        <title>Insights into the environmental resistance gene pool from the genome sequence of the multidrug-resistant environmental isolate Escherichia coli SMS-3-5.</title>
        <authorList>
            <person name="Fricke W.F."/>
            <person name="Wright M.S."/>
            <person name="Lindell A.H."/>
            <person name="Harkins D.M."/>
            <person name="Baker-Austin C."/>
            <person name="Ravel J."/>
            <person name="Stepanauskas R."/>
        </authorList>
    </citation>
    <scope>NUCLEOTIDE SEQUENCE [LARGE SCALE GENOMIC DNA]</scope>
    <source>
        <strain>SMS-3-5 / SECEC</strain>
    </source>
</reference>
<accession>B1LFM7</accession>
<sequence length="256" mass="27399">MNNDVFPNKFKAALAAKQVQIGCWSALSNPISTEVLGLAGFDWLVLDGEHAPNDISTFIPQLMALKGSASAPVVRVPTNEPVIIKRLLDIGFYNFLIPFVETKEEAEQAVASTRYPPEGIRGVSVSHRANMFGTVADYFAQSNKNITILVQIESQQGVDNVDAIAATEGVDGIFVGPSDLAAALGHLGNASHPDVQKAIQHIFNRASAHGKPSGILAPVEADARRYLEWGATFVAVGSDLGVFRSATQKLADTFKK</sequence>